<organism>
    <name type="scientific">Photorhabdus laumondii subsp. laumondii (strain DSM 15139 / CIP 105565 / TT01)</name>
    <name type="common">Photorhabdus luminescens subsp. laumondii</name>
    <dbReference type="NCBI Taxonomy" id="243265"/>
    <lineage>
        <taxon>Bacteria</taxon>
        <taxon>Pseudomonadati</taxon>
        <taxon>Pseudomonadota</taxon>
        <taxon>Gammaproteobacteria</taxon>
        <taxon>Enterobacterales</taxon>
        <taxon>Morganellaceae</taxon>
        <taxon>Photorhabdus</taxon>
    </lineage>
</organism>
<reference key="1">
    <citation type="journal article" date="2003" name="Nat. Biotechnol.">
        <title>The genome sequence of the entomopathogenic bacterium Photorhabdus luminescens.</title>
        <authorList>
            <person name="Duchaud E."/>
            <person name="Rusniok C."/>
            <person name="Frangeul L."/>
            <person name="Buchrieser C."/>
            <person name="Givaudan A."/>
            <person name="Taourit S."/>
            <person name="Bocs S."/>
            <person name="Boursaux-Eude C."/>
            <person name="Chandler M."/>
            <person name="Charles J.-F."/>
            <person name="Dassa E."/>
            <person name="Derose R."/>
            <person name="Derzelle S."/>
            <person name="Freyssinet G."/>
            <person name="Gaudriault S."/>
            <person name="Medigue C."/>
            <person name="Lanois A."/>
            <person name="Powell K."/>
            <person name="Siguier P."/>
            <person name="Vincent R."/>
            <person name="Wingate V."/>
            <person name="Zouine M."/>
            <person name="Glaser P."/>
            <person name="Boemare N."/>
            <person name="Danchin A."/>
            <person name="Kunst F."/>
        </authorList>
    </citation>
    <scope>NUCLEOTIDE SEQUENCE [LARGE SCALE GENOMIC DNA]</scope>
    <source>
        <strain>DSM 15139 / CIP 105565 / TT01</strain>
    </source>
</reference>
<feature type="chain" id="PRO_0000083101" description="Bifunctional polymyxin resistance protein ArnA">
    <location>
        <begin position="1"/>
        <end position="660"/>
    </location>
</feature>
<feature type="region of interest" description="Formyltransferase ArnAFT">
    <location>
        <begin position="1"/>
        <end position="304"/>
    </location>
</feature>
<feature type="region of interest" description="Dehydrogenase ArnADH">
    <location>
        <begin position="314"/>
        <end position="660"/>
    </location>
</feature>
<feature type="active site" description="Proton donor; for formyltransferase activity" evidence="1">
    <location>
        <position position="104"/>
    </location>
</feature>
<feature type="active site" description="Proton acceptor; for decarboxylase activity" evidence="1">
    <location>
        <position position="434"/>
    </location>
</feature>
<feature type="active site" description="Proton donor; for decarboxylase activity" evidence="1">
    <location>
        <position position="619"/>
    </location>
</feature>
<feature type="binding site" evidence="1">
    <location>
        <position position="114"/>
    </location>
    <ligand>
        <name>(6R)-10-formyltetrahydrofolate</name>
        <dbReference type="ChEBI" id="CHEBI:195366"/>
    </ligand>
</feature>
<feature type="binding site" evidence="1">
    <location>
        <begin position="136"/>
        <end position="140"/>
    </location>
    <ligand>
        <name>(6R)-10-formyltetrahydrofolate</name>
        <dbReference type="ChEBI" id="CHEBI:195366"/>
    </ligand>
</feature>
<feature type="binding site" evidence="1">
    <location>
        <position position="347"/>
    </location>
    <ligand>
        <name>NAD(+)</name>
        <dbReference type="ChEBI" id="CHEBI:57540"/>
    </ligand>
</feature>
<feature type="binding site" evidence="1">
    <location>
        <begin position="368"/>
        <end position="369"/>
    </location>
    <ligand>
        <name>NAD(+)</name>
        <dbReference type="ChEBI" id="CHEBI:57540"/>
    </ligand>
</feature>
<feature type="binding site" evidence="1">
    <location>
        <position position="393"/>
    </location>
    <ligand>
        <name>UDP-alpha-D-glucuronate</name>
        <dbReference type="ChEBI" id="CHEBI:58052"/>
    </ligand>
</feature>
<feature type="binding site" evidence="1">
    <location>
        <position position="398"/>
    </location>
    <ligand>
        <name>UDP-alpha-D-glucuronate</name>
        <dbReference type="ChEBI" id="CHEBI:58052"/>
    </ligand>
</feature>
<feature type="binding site" evidence="1">
    <location>
        <begin position="432"/>
        <end position="433"/>
    </location>
    <ligand>
        <name>UDP-alpha-D-glucuronate</name>
        <dbReference type="ChEBI" id="CHEBI:58052"/>
    </ligand>
</feature>
<feature type="binding site" evidence="1">
    <location>
        <position position="460"/>
    </location>
    <ligand>
        <name>UDP-alpha-D-glucuronate</name>
        <dbReference type="ChEBI" id="CHEBI:58052"/>
    </ligand>
</feature>
<feature type="binding site" evidence="1">
    <location>
        <position position="492"/>
    </location>
    <ligand>
        <name>UDP-alpha-D-glucuronate</name>
        <dbReference type="ChEBI" id="CHEBI:58052"/>
    </ligand>
</feature>
<feature type="binding site" evidence="1">
    <location>
        <begin position="526"/>
        <end position="535"/>
    </location>
    <ligand>
        <name>UDP-alpha-D-glucuronate</name>
        <dbReference type="ChEBI" id="CHEBI:58052"/>
    </ligand>
</feature>
<feature type="binding site" evidence="1">
    <location>
        <position position="613"/>
    </location>
    <ligand>
        <name>UDP-alpha-D-glucuronate</name>
        <dbReference type="ChEBI" id="CHEBI:58052"/>
    </ligand>
</feature>
<feature type="site" description="Transition state stabilizer" evidence="1">
    <location>
        <position position="102"/>
    </location>
</feature>
<feature type="site" description="Raises pKa of active site His" evidence="1">
    <location>
        <position position="140"/>
    </location>
</feature>
<keyword id="KW-0046">Antibiotic resistance</keyword>
<keyword id="KW-0441">Lipid A biosynthesis</keyword>
<keyword id="KW-0444">Lipid biosynthesis</keyword>
<keyword id="KW-0443">Lipid metabolism</keyword>
<keyword id="KW-0448">Lipopolysaccharide biosynthesis</keyword>
<keyword id="KW-0511">Multifunctional enzyme</keyword>
<keyword id="KW-0520">NAD</keyword>
<keyword id="KW-0560">Oxidoreductase</keyword>
<keyword id="KW-1185">Reference proteome</keyword>
<keyword id="KW-0808">Transferase</keyword>
<comment type="function">
    <text evidence="1">Bifunctional enzyme that catalyzes the oxidative decarboxylation of UDP-glucuronic acid (UDP-GlcUA) to UDP-4-keto-arabinose (UDP-Ara4O) and the addition of a formyl group to UDP-4-amino-4-deoxy-L-arabinose (UDP-L-Ara4N) to form UDP-L-4-formamido-arabinose (UDP-L-Ara4FN). The modified arabinose is attached to lipid A and is required for resistance to polymyxin and cationic antimicrobial peptides.</text>
</comment>
<comment type="catalytic activity">
    <reaction evidence="1">
        <text>UDP-alpha-D-glucuronate + NAD(+) = UDP-beta-L-threo-pentopyranos-4-ulose + CO2 + NADH</text>
        <dbReference type="Rhea" id="RHEA:24702"/>
        <dbReference type="ChEBI" id="CHEBI:16526"/>
        <dbReference type="ChEBI" id="CHEBI:57540"/>
        <dbReference type="ChEBI" id="CHEBI:57945"/>
        <dbReference type="ChEBI" id="CHEBI:58052"/>
        <dbReference type="ChEBI" id="CHEBI:58710"/>
        <dbReference type="EC" id="1.1.1.305"/>
    </reaction>
</comment>
<comment type="catalytic activity">
    <reaction evidence="1">
        <text>UDP-4-amino-4-deoxy-beta-L-arabinose + (6R)-10-formyltetrahydrofolate = UDP-4-deoxy-4-formamido-beta-L-arabinose + (6S)-5,6,7,8-tetrahydrofolate + H(+)</text>
        <dbReference type="Rhea" id="RHEA:24706"/>
        <dbReference type="ChEBI" id="CHEBI:15378"/>
        <dbReference type="ChEBI" id="CHEBI:57453"/>
        <dbReference type="ChEBI" id="CHEBI:58708"/>
        <dbReference type="ChEBI" id="CHEBI:58709"/>
        <dbReference type="ChEBI" id="CHEBI:195366"/>
        <dbReference type="EC" id="2.1.2.13"/>
    </reaction>
</comment>
<comment type="pathway">
    <text evidence="1">Nucleotide-sugar biosynthesis; UDP-4-deoxy-4-formamido-beta-L-arabinose biosynthesis; UDP-4-deoxy-4-formamido-beta-L-arabinose from UDP-alpha-D-glucuronate: step 1/3.</text>
</comment>
<comment type="pathway">
    <text evidence="1">Nucleotide-sugar biosynthesis; UDP-4-deoxy-4-formamido-beta-L-arabinose biosynthesis; UDP-4-deoxy-4-formamido-beta-L-arabinose from UDP-alpha-D-glucuronate: step 3/3.</text>
</comment>
<comment type="pathway">
    <text evidence="1">Bacterial outer membrane biogenesis; lipopolysaccharide biosynthesis.</text>
</comment>
<comment type="subunit">
    <text evidence="1">Homohexamer, formed by a dimer of trimers.</text>
</comment>
<comment type="similarity">
    <text evidence="1">In the N-terminal section; belongs to the Fmt family. UDP-L-Ara4N formyltransferase subfamily.</text>
</comment>
<comment type="similarity">
    <text evidence="1">In the C-terminal section; belongs to the NAD(P)-dependent epimerase/dehydratase family. UDP-glucuronic acid decarboxylase subfamily.</text>
</comment>
<accession>Q7N3Q7</accession>
<evidence type="ECO:0000255" key="1">
    <source>
        <dbReference type="HAMAP-Rule" id="MF_01166"/>
    </source>
</evidence>
<proteinExistence type="inferred from homology"/>
<sequence>MKAIVFAYHDIGCVGINALTKAGFDIQAVFTHTDDPNENHFFSSVARLSADLALPVFAPENVNHPLWIERIRELKPDVIFSFYYRDMLSEDILSLASTGAFNLHGSLLPKYRGRAPINWAILNGEVETGVTLHKMVLKPDAGDIIAQYKVAIAETDTALTLHGKIREAAEKLFDQVLPQIKAGIYPAIPQDESQATYFGRRTAVDGEIDWHKSATEINNLVRAVTEPYPGAFTFLGERKITIWRACPLNETHDKQPGTVLSVDPLIIACGKGTLEIINGQSESGLYVQGHRLAVDMSMVTDVRVGPKATTQINHRKRVLILGVNGFIGNHLTERLLRDGNYDIYGMDIGSSAIERFISNPRFHFIEGDINIHTEWIEYHIKKCDVVLPLVAIATPIEYTRNPLRVFELDFEENLKIVRYCVKYNKRIIFPSTSEVYGMCDDKEFDEDDSRLIVGPINKQRWIYSVSKQLLDRVIWAYGEKEGLKFTLFRPFNWMGPRLDNLNSARIGSSRAITQLILNLVEGSPIKLVDGGEQKRCFTDINDGIEALFRIIENREGLCDGQIINIGNPTNEASIRQLAEILLDSFEDHELRDHFPPFAGFKKVESGSYYGKGYQDVEHRKPSIKNAERLLDWKPTIDMKQTINETLDFFLRGAVEELGKN</sequence>
<dbReference type="EC" id="2.1.2.13" evidence="1"/>
<dbReference type="EC" id="1.1.1.305" evidence="1"/>
<dbReference type="EMBL" id="BX571867">
    <property type="protein sequence ID" value="CAE15032.1"/>
    <property type="molecule type" value="Genomic_DNA"/>
</dbReference>
<dbReference type="RefSeq" id="WP_011146880.1">
    <property type="nucleotide sequence ID" value="NC_005126.1"/>
</dbReference>
<dbReference type="SMR" id="Q7N3Q7"/>
<dbReference type="STRING" id="243265.plu2658"/>
<dbReference type="GeneID" id="48848921"/>
<dbReference type="KEGG" id="plu:plu2658"/>
<dbReference type="eggNOG" id="COG0223">
    <property type="taxonomic scope" value="Bacteria"/>
</dbReference>
<dbReference type="eggNOG" id="COG0451">
    <property type="taxonomic scope" value="Bacteria"/>
</dbReference>
<dbReference type="HOGENOM" id="CLU_007383_23_2_6"/>
<dbReference type="OrthoDB" id="9802815at2"/>
<dbReference type="UniPathway" id="UPA00030"/>
<dbReference type="UniPathway" id="UPA00032">
    <property type="reaction ID" value="UER00492"/>
</dbReference>
<dbReference type="UniPathway" id="UPA00032">
    <property type="reaction ID" value="UER00494"/>
</dbReference>
<dbReference type="Proteomes" id="UP000002514">
    <property type="component" value="Chromosome"/>
</dbReference>
<dbReference type="GO" id="GO:0016020">
    <property type="term" value="C:membrane"/>
    <property type="evidence" value="ECO:0007669"/>
    <property type="project" value="GOC"/>
</dbReference>
<dbReference type="GO" id="GO:0016831">
    <property type="term" value="F:carboxy-lyase activity"/>
    <property type="evidence" value="ECO:0007669"/>
    <property type="project" value="InterPro"/>
</dbReference>
<dbReference type="GO" id="GO:0099619">
    <property type="term" value="F:UDP-4-amino-4-deoxy-L-arabinose formyltransferase activity"/>
    <property type="evidence" value="ECO:0007669"/>
    <property type="project" value="UniProtKB-EC"/>
</dbReference>
<dbReference type="GO" id="GO:0099618">
    <property type="term" value="F:UDP-glucuronate dehydrogenase activity"/>
    <property type="evidence" value="ECO:0007669"/>
    <property type="project" value="UniProtKB-EC"/>
</dbReference>
<dbReference type="GO" id="GO:0009245">
    <property type="term" value="P:lipid A biosynthetic process"/>
    <property type="evidence" value="ECO:0007669"/>
    <property type="project" value="UniProtKB-KW"/>
</dbReference>
<dbReference type="GO" id="GO:0009103">
    <property type="term" value="P:lipopolysaccharide biosynthetic process"/>
    <property type="evidence" value="ECO:0007669"/>
    <property type="project" value="UniProtKB-UniRule"/>
</dbReference>
<dbReference type="GO" id="GO:0046677">
    <property type="term" value="P:response to antibiotic"/>
    <property type="evidence" value="ECO:0007669"/>
    <property type="project" value="UniProtKB-KW"/>
</dbReference>
<dbReference type="CDD" id="cd08702">
    <property type="entry name" value="Arna_FMT_C"/>
    <property type="match status" value="1"/>
</dbReference>
<dbReference type="CDD" id="cd05257">
    <property type="entry name" value="Arna_like_SDR_e"/>
    <property type="match status" value="1"/>
</dbReference>
<dbReference type="FunFam" id="3.40.50.720:FF:000197">
    <property type="entry name" value="Bifunctional polymyxin resistance protein ArnA"/>
    <property type="match status" value="1"/>
</dbReference>
<dbReference type="Gene3D" id="3.40.50.12230">
    <property type="match status" value="1"/>
</dbReference>
<dbReference type="Gene3D" id="3.40.50.720">
    <property type="entry name" value="NAD(P)-binding Rossmann-like Domain"/>
    <property type="match status" value="1"/>
</dbReference>
<dbReference type="HAMAP" id="MF_01166">
    <property type="entry name" value="ArnA"/>
    <property type="match status" value="1"/>
</dbReference>
<dbReference type="InterPro" id="IPR045869">
    <property type="entry name" value="Arna-like_SDR_e"/>
</dbReference>
<dbReference type="InterPro" id="IPR021168">
    <property type="entry name" value="Bifun_polymyxin_resist_ArnA"/>
</dbReference>
<dbReference type="InterPro" id="IPR001509">
    <property type="entry name" value="Epimerase_deHydtase"/>
</dbReference>
<dbReference type="InterPro" id="IPR005793">
    <property type="entry name" value="Formyl_trans_C"/>
</dbReference>
<dbReference type="InterPro" id="IPR002376">
    <property type="entry name" value="Formyl_transf_N"/>
</dbReference>
<dbReference type="InterPro" id="IPR036477">
    <property type="entry name" value="Formyl_transf_N_sf"/>
</dbReference>
<dbReference type="InterPro" id="IPR011034">
    <property type="entry name" value="Formyl_transferase-like_C_sf"/>
</dbReference>
<dbReference type="InterPro" id="IPR050177">
    <property type="entry name" value="Lipid_A_modif_metabolic_enz"/>
</dbReference>
<dbReference type="InterPro" id="IPR036291">
    <property type="entry name" value="NAD(P)-bd_dom_sf"/>
</dbReference>
<dbReference type="NCBIfam" id="NF005414">
    <property type="entry name" value="PRK06988.1"/>
    <property type="match status" value="1"/>
</dbReference>
<dbReference type="NCBIfam" id="NF005998">
    <property type="entry name" value="PRK08125.1"/>
    <property type="match status" value="1"/>
</dbReference>
<dbReference type="NCBIfam" id="NF008872">
    <property type="entry name" value="PRK11908.1"/>
    <property type="match status" value="1"/>
</dbReference>
<dbReference type="PANTHER" id="PTHR43245">
    <property type="entry name" value="BIFUNCTIONAL POLYMYXIN RESISTANCE PROTEIN ARNA"/>
    <property type="match status" value="1"/>
</dbReference>
<dbReference type="PANTHER" id="PTHR43245:SF13">
    <property type="entry name" value="UDP-D-APIOSE_UDP-D-XYLOSE SYNTHASE 2"/>
    <property type="match status" value="1"/>
</dbReference>
<dbReference type="Pfam" id="PF01370">
    <property type="entry name" value="Epimerase"/>
    <property type="match status" value="1"/>
</dbReference>
<dbReference type="Pfam" id="PF02911">
    <property type="entry name" value="Formyl_trans_C"/>
    <property type="match status" value="1"/>
</dbReference>
<dbReference type="Pfam" id="PF00551">
    <property type="entry name" value="Formyl_trans_N"/>
    <property type="match status" value="1"/>
</dbReference>
<dbReference type="PIRSF" id="PIRSF036506">
    <property type="entry name" value="Bifun_polymyxin_resist_ArnA"/>
    <property type="match status" value="1"/>
</dbReference>
<dbReference type="SUPFAM" id="SSF50486">
    <property type="entry name" value="FMT C-terminal domain-like"/>
    <property type="match status" value="1"/>
</dbReference>
<dbReference type="SUPFAM" id="SSF53328">
    <property type="entry name" value="Formyltransferase"/>
    <property type="match status" value="1"/>
</dbReference>
<dbReference type="SUPFAM" id="SSF51735">
    <property type="entry name" value="NAD(P)-binding Rossmann-fold domains"/>
    <property type="match status" value="1"/>
</dbReference>
<gene>
    <name evidence="1" type="primary">arnA</name>
    <name type="ordered locus">plu2658</name>
</gene>
<protein>
    <recommendedName>
        <fullName evidence="1">Bifunctional polymyxin resistance protein ArnA</fullName>
    </recommendedName>
    <domain>
        <recommendedName>
            <fullName evidence="1">UDP-4-amino-4-deoxy-L-arabinose formyltransferase</fullName>
            <ecNumber evidence="1">2.1.2.13</ecNumber>
        </recommendedName>
        <alternativeName>
            <fullName evidence="1">ArnAFT</fullName>
        </alternativeName>
        <alternativeName>
            <fullName evidence="1">UDP-L-Ara4N formyltransferase</fullName>
        </alternativeName>
    </domain>
    <domain>
        <recommendedName>
            <fullName evidence="1">UDP-glucuronic acid oxidase, UDP-4-keto-hexauronic acid decarboxylating</fullName>
            <ecNumber evidence="1">1.1.1.305</ecNumber>
        </recommendedName>
        <alternativeName>
            <fullName evidence="1">ArnADH</fullName>
        </alternativeName>
        <alternativeName>
            <fullName evidence="1">UDP-GlcUA decarboxylase</fullName>
        </alternativeName>
        <alternativeName>
            <fullName evidence="1">UDP-glucuronic acid dehydrogenase</fullName>
        </alternativeName>
    </domain>
</protein>
<name>ARNA_PHOLL</name>